<keyword id="KW-0067">ATP-binding</keyword>
<keyword id="KW-0963">Cytoplasm</keyword>
<keyword id="KW-0227">DNA damage</keyword>
<keyword id="KW-0233">DNA recombination</keyword>
<keyword id="KW-0234">DNA repair</keyword>
<keyword id="KW-0238">DNA-binding</keyword>
<keyword id="KW-0378">Hydrolase</keyword>
<keyword id="KW-0547">Nucleotide-binding</keyword>
<keyword id="KW-1185">Reference proteome</keyword>
<keyword id="KW-0742">SOS response</keyword>
<evidence type="ECO:0000255" key="1">
    <source>
        <dbReference type="HAMAP-Rule" id="MF_00016"/>
    </source>
</evidence>
<name>RUVB_ECO45</name>
<organism>
    <name type="scientific">Escherichia coli O45:K1 (strain S88 / ExPEC)</name>
    <dbReference type="NCBI Taxonomy" id="585035"/>
    <lineage>
        <taxon>Bacteria</taxon>
        <taxon>Pseudomonadati</taxon>
        <taxon>Pseudomonadota</taxon>
        <taxon>Gammaproteobacteria</taxon>
        <taxon>Enterobacterales</taxon>
        <taxon>Enterobacteriaceae</taxon>
        <taxon>Escherichia</taxon>
    </lineage>
</organism>
<feature type="chain" id="PRO_1000195221" description="Holliday junction branch migration complex subunit RuvB">
    <location>
        <begin position="1"/>
        <end position="336"/>
    </location>
</feature>
<feature type="region of interest" description="Large ATPase domain (RuvB-L)" evidence="1">
    <location>
        <begin position="4"/>
        <end position="184"/>
    </location>
</feature>
<feature type="region of interest" description="Small ATPAse domain (RuvB-S)" evidence="1">
    <location>
        <begin position="185"/>
        <end position="255"/>
    </location>
</feature>
<feature type="region of interest" description="Head domain (RuvB-H)" evidence="1">
    <location>
        <begin position="258"/>
        <end position="336"/>
    </location>
</feature>
<feature type="binding site" evidence="1">
    <location>
        <position position="23"/>
    </location>
    <ligand>
        <name>ATP</name>
        <dbReference type="ChEBI" id="CHEBI:30616"/>
    </ligand>
</feature>
<feature type="binding site" evidence="1">
    <location>
        <position position="24"/>
    </location>
    <ligand>
        <name>ATP</name>
        <dbReference type="ChEBI" id="CHEBI:30616"/>
    </ligand>
</feature>
<feature type="binding site" evidence="1">
    <location>
        <position position="65"/>
    </location>
    <ligand>
        <name>ATP</name>
        <dbReference type="ChEBI" id="CHEBI:30616"/>
    </ligand>
</feature>
<feature type="binding site" evidence="1">
    <location>
        <position position="68"/>
    </location>
    <ligand>
        <name>ATP</name>
        <dbReference type="ChEBI" id="CHEBI:30616"/>
    </ligand>
</feature>
<feature type="binding site" evidence="1">
    <location>
        <position position="69"/>
    </location>
    <ligand>
        <name>ATP</name>
        <dbReference type="ChEBI" id="CHEBI:30616"/>
    </ligand>
</feature>
<feature type="binding site" evidence="1">
    <location>
        <position position="69"/>
    </location>
    <ligand>
        <name>Mg(2+)</name>
        <dbReference type="ChEBI" id="CHEBI:18420"/>
    </ligand>
</feature>
<feature type="binding site" evidence="1">
    <location>
        <position position="70"/>
    </location>
    <ligand>
        <name>ATP</name>
        <dbReference type="ChEBI" id="CHEBI:30616"/>
    </ligand>
</feature>
<feature type="binding site" evidence="1">
    <location>
        <begin position="131"/>
        <end position="133"/>
    </location>
    <ligand>
        <name>ATP</name>
        <dbReference type="ChEBI" id="CHEBI:30616"/>
    </ligand>
</feature>
<feature type="binding site" evidence="1">
    <location>
        <position position="174"/>
    </location>
    <ligand>
        <name>ATP</name>
        <dbReference type="ChEBI" id="CHEBI:30616"/>
    </ligand>
</feature>
<feature type="binding site" evidence="1">
    <location>
        <position position="184"/>
    </location>
    <ligand>
        <name>ATP</name>
        <dbReference type="ChEBI" id="CHEBI:30616"/>
    </ligand>
</feature>
<feature type="binding site" evidence="1">
    <location>
        <position position="221"/>
    </location>
    <ligand>
        <name>ATP</name>
        <dbReference type="ChEBI" id="CHEBI:30616"/>
    </ligand>
</feature>
<feature type="binding site" evidence="1">
    <location>
        <position position="294"/>
    </location>
    <ligand>
        <name>DNA</name>
        <dbReference type="ChEBI" id="CHEBI:16991"/>
    </ligand>
</feature>
<feature type="binding site" evidence="1">
    <location>
        <position position="313"/>
    </location>
    <ligand>
        <name>DNA</name>
        <dbReference type="ChEBI" id="CHEBI:16991"/>
    </ligand>
</feature>
<feature type="binding site" evidence="1">
    <location>
        <position position="318"/>
    </location>
    <ligand>
        <name>DNA</name>
        <dbReference type="ChEBI" id="CHEBI:16991"/>
    </ligand>
</feature>
<protein>
    <recommendedName>
        <fullName evidence="1">Holliday junction branch migration complex subunit RuvB</fullName>
        <ecNumber evidence="1">3.6.4.-</ecNumber>
    </recommendedName>
</protein>
<gene>
    <name evidence="1" type="primary">ruvB</name>
    <name type="ordered locus">ECS88_1917</name>
</gene>
<comment type="function">
    <text evidence="1">The RuvA-RuvB-RuvC complex processes Holliday junction (HJ) DNA during genetic recombination and DNA repair, while the RuvA-RuvB complex plays an important role in the rescue of blocked DNA replication forks via replication fork reversal (RFR). RuvA specifically binds to HJ cruciform DNA, conferring on it an open structure. The RuvB hexamer acts as an ATP-dependent pump, pulling dsDNA into and through the RuvAB complex. RuvB forms 2 homohexamers on either side of HJ DNA bound by 1 or 2 RuvA tetramers; 4 subunits per hexamer contact DNA at a time. Coordinated motions by a converter formed by DNA-disengaged RuvB subunits stimulates ATP hydrolysis and nucleotide exchange. Immobilization of the converter enables RuvB to convert the ATP-contained energy into a lever motion, pulling 2 nucleotides of DNA out of the RuvA tetramer per ATP hydrolyzed, thus driving DNA branch migration. The RuvB motors rotate together with the DNA substrate, which together with the progressing nucleotide cycle form the mechanistic basis for DNA recombination by continuous HJ branch migration. Branch migration allows RuvC to scan DNA until it finds its consensus sequence, where it cleaves and resolves cruciform DNA.</text>
</comment>
<comment type="catalytic activity">
    <reaction evidence="1">
        <text>ATP + H2O = ADP + phosphate + H(+)</text>
        <dbReference type="Rhea" id="RHEA:13065"/>
        <dbReference type="ChEBI" id="CHEBI:15377"/>
        <dbReference type="ChEBI" id="CHEBI:15378"/>
        <dbReference type="ChEBI" id="CHEBI:30616"/>
        <dbReference type="ChEBI" id="CHEBI:43474"/>
        <dbReference type="ChEBI" id="CHEBI:456216"/>
    </reaction>
</comment>
<comment type="subunit">
    <text evidence="1">Homohexamer. Forms an RuvA(8)-RuvB(12)-Holliday junction (HJ) complex. HJ DNA is sandwiched between 2 RuvA tetramers; dsDNA enters through RuvA and exits via RuvB. An RuvB hexamer assembles on each DNA strand where it exits the tetramer. Each RuvB hexamer is contacted by two RuvA subunits (via domain III) on 2 adjacent RuvB subunits; this complex drives branch migration. In the full resolvosome a probable DNA-RuvA(4)-RuvB(12)-RuvC(2) complex forms which resolves the HJ.</text>
</comment>
<comment type="subcellular location">
    <subcellularLocation>
        <location evidence="1">Cytoplasm</location>
    </subcellularLocation>
</comment>
<comment type="domain">
    <text evidence="1">Has 3 domains, the large (RuvB-L) and small ATPase (RuvB-S) domains and the C-terminal head (RuvB-H) domain. The head domain binds DNA, while the ATPase domains jointly bind ATP, ADP or are empty depending on the state of the subunit in the translocation cycle. During a single DNA translocation step the structure of each domain remains the same, but their relative positions change.</text>
</comment>
<comment type="similarity">
    <text evidence="1">Belongs to the RuvB family.</text>
</comment>
<sequence length="336" mass="37174">MIEADRLISAGTTLPEDVADRAIRPKLLEEYVGQPQVRSQMEIFIKAAKLRGDALDHLLIFGPPGLGKTTLANIVANEMGVNLRTTSGPVLEKAGDLAAMLTNLEPHDVLFIDEIHRLSPVVEEVLYPAMEDYQLDIMIGEGPAARSIKIDLPPFTLIGATTRAGSLTSPLRDRFGIVQRLEFYQVPDLQYIVSRSARFMGLEMSDDGALEVARRARGTPRIANRLLRRVRDFAEVKHDGTISADIAAQALDMLNVDAEGFDYMDRKLLLAVIDKFFGGPVGLDNLAAAIGEERETIEDVLEPYLIQQGFLQRTPRGRMATTRAWNHFGITPPEMP</sequence>
<proteinExistence type="inferred from homology"/>
<dbReference type="EC" id="3.6.4.-" evidence="1"/>
<dbReference type="EMBL" id="CU928161">
    <property type="protein sequence ID" value="CAR03221.1"/>
    <property type="molecule type" value="Genomic_DNA"/>
</dbReference>
<dbReference type="RefSeq" id="WP_000568519.1">
    <property type="nucleotide sequence ID" value="NC_011742.1"/>
</dbReference>
<dbReference type="SMR" id="B7MBR9"/>
<dbReference type="GeneID" id="75202735"/>
<dbReference type="KEGG" id="ecz:ECS88_1917"/>
<dbReference type="HOGENOM" id="CLU_055599_1_0_6"/>
<dbReference type="Proteomes" id="UP000000747">
    <property type="component" value="Chromosome"/>
</dbReference>
<dbReference type="GO" id="GO:0005737">
    <property type="term" value="C:cytoplasm"/>
    <property type="evidence" value="ECO:0007669"/>
    <property type="project" value="UniProtKB-SubCell"/>
</dbReference>
<dbReference type="GO" id="GO:0048476">
    <property type="term" value="C:Holliday junction resolvase complex"/>
    <property type="evidence" value="ECO:0007669"/>
    <property type="project" value="UniProtKB-UniRule"/>
</dbReference>
<dbReference type="GO" id="GO:0005524">
    <property type="term" value="F:ATP binding"/>
    <property type="evidence" value="ECO:0007669"/>
    <property type="project" value="UniProtKB-UniRule"/>
</dbReference>
<dbReference type="GO" id="GO:0016887">
    <property type="term" value="F:ATP hydrolysis activity"/>
    <property type="evidence" value="ECO:0007669"/>
    <property type="project" value="InterPro"/>
</dbReference>
<dbReference type="GO" id="GO:0000400">
    <property type="term" value="F:four-way junction DNA binding"/>
    <property type="evidence" value="ECO:0007669"/>
    <property type="project" value="UniProtKB-UniRule"/>
</dbReference>
<dbReference type="GO" id="GO:0009378">
    <property type="term" value="F:four-way junction helicase activity"/>
    <property type="evidence" value="ECO:0007669"/>
    <property type="project" value="InterPro"/>
</dbReference>
<dbReference type="GO" id="GO:0006310">
    <property type="term" value="P:DNA recombination"/>
    <property type="evidence" value="ECO:0007669"/>
    <property type="project" value="UniProtKB-UniRule"/>
</dbReference>
<dbReference type="GO" id="GO:0006281">
    <property type="term" value="P:DNA repair"/>
    <property type="evidence" value="ECO:0007669"/>
    <property type="project" value="UniProtKB-UniRule"/>
</dbReference>
<dbReference type="GO" id="GO:0009432">
    <property type="term" value="P:SOS response"/>
    <property type="evidence" value="ECO:0007669"/>
    <property type="project" value="UniProtKB-UniRule"/>
</dbReference>
<dbReference type="CDD" id="cd00009">
    <property type="entry name" value="AAA"/>
    <property type="match status" value="1"/>
</dbReference>
<dbReference type="FunFam" id="1.10.10.10:FF:000086">
    <property type="entry name" value="Holliday junction ATP-dependent DNA helicase RuvB"/>
    <property type="match status" value="1"/>
</dbReference>
<dbReference type="FunFam" id="1.10.8.60:FF:000023">
    <property type="entry name" value="Holliday junction ATP-dependent DNA helicase RuvB"/>
    <property type="match status" value="1"/>
</dbReference>
<dbReference type="FunFam" id="3.40.50.300:FF:000073">
    <property type="entry name" value="Holliday junction ATP-dependent DNA helicase RuvB"/>
    <property type="match status" value="1"/>
</dbReference>
<dbReference type="Gene3D" id="1.10.8.60">
    <property type="match status" value="1"/>
</dbReference>
<dbReference type="Gene3D" id="3.40.50.300">
    <property type="entry name" value="P-loop containing nucleotide triphosphate hydrolases"/>
    <property type="match status" value="1"/>
</dbReference>
<dbReference type="Gene3D" id="1.10.10.10">
    <property type="entry name" value="Winged helix-like DNA-binding domain superfamily/Winged helix DNA-binding domain"/>
    <property type="match status" value="1"/>
</dbReference>
<dbReference type="HAMAP" id="MF_00016">
    <property type="entry name" value="DNA_HJ_migration_RuvB"/>
    <property type="match status" value="1"/>
</dbReference>
<dbReference type="InterPro" id="IPR003593">
    <property type="entry name" value="AAA+_ATPase"/>
</dbReference>
<dbReference type="InterPro" id="IPR041445">
    <property type="entry name" value="AAA_lid_4"/>
</dbReference>
<dbReference type="InterPro" id="IPR004605">
    <property type="entry name" value="DNA_helicase_Holl-junc_RuvB"/>
</dbReference>
<dbReference type="InterPro" id="IPR027417">
    <property type="entry name" value="P-loop_NTPase"/>
</dbReference>
<dbReference type="InterPro" id="IPR008824">
    <property type="entry name" value="RuvB-like_N"/>
</dbReference>
<dbReference type="InterPro" id="IPR008823">
    <property type="entry name" value="RuvB_C"/>
</dbReference>
<dbReference type="InterPro" id="IPR036388">
    <property type="entry name" value="WH-like_DNA-bd_sf"/>
</dbReference>
<dbReference type="InterPro" id="IPR036390">
    <property type="entry name" value="WH_DNA-bd_sf"/>
</dbReference>
<dbReference type="NCBIfam" id="NF000868">
    <property type="entry name" value="PRK00080.1"/>
    <property type="match status" value="1"/>
</dbReference>
<dbReference type="NCBIfam" id="TIGR00635">
    <property type="entry name" value="ruvB"/>
    <property type="match status" value="1"/>
</dbReference>
<dbReference type="PANTHER" id="PTHR42848">
    <property type="match status" value="1"/>
</dbReference>
<dbReference type="PANTHER" id="PTHR42848:SF1">
    <property type="entry name" value="HOLLIDAY JUNCTION BRANCH MIGRATION COMPLEX SUBUNIT RUVB"/>
    <property type="match status" value="1"/>
</dbReference>
<dbReference type="Pfam" id="PF17864">
    <property type="entry name" value="AAA_lid_4"/>
    <property type="match status" value="1"/>
</dbReference>
<dbReference type="Pfam" id="PF05491">
    <property type="entry name" value="RuvB_C"/>
    <property type="match status" value="1"/>
</dbReference>
<dbReference type="Pfam" id="PF05496">
    <property type="entry name" value="RuvB_N"/>
    <property type="match status" value="1"/>
</dbReference>
<dbReference type="SMART" id="SM00382">
    <property type="entry name" value="AAA"/>
    <property type="match status" value="1"/>
</dbReference>
<dbReference type="SUPFAM" id="SSF52540">
    <property type="entry name" value="P-loop containing nucleoside triphosphate hydrolases"/>
    <property type="match status" value="1"/>
</dbReference>
<dbReference type="SUPFAM" id="SSF46785">
    <property type="entry name" value="Winged helix' DNA-binding domain"/>
    <property type="match status" value="1"/>
</dbReference>
<accession>B7MBR9</accession>
<reference key="1">
    <citation type="journal article" date="2009" name="PLoS Genet.">
        <title>Organised genome dynamics in the Escherichia coli species results in highly diverse adaptive paths.</title>
        <authorList>
            <person name="Touchon M."/>
            <person name="Hoede C."/>
            <person name="Tenaillon O."/>
            <person name="Barbe V."/>
            <person name="Baeriswyl S."/>
            <person name="Bidet P."/>
            <person name="Bingen E."/>
            <person name="Bonacorsi S."/>
            <person name="Bouchier C."/>
            <person name="Bouvet O."/>
            <person name="Calteau A."/>
            <person name="Chiapello H."/>
            <person name="Clermont O."/>
            <person name="Cruveiller S."/>
            <person name="Danchin A."/>
            <person name="Diard M."/>
            <person name="Dossat C."/>
            <person name="Karoui M.E."/>
            <person name="Frapy E."/>
            <person name="Garry L."/>
            <person name="Ghigo J.M."/>
            <person name="Gilles A.M."/>
            <person name="Johnson J."/>
            <person name="Le Bouguenec C."/>
            <person name="Lescat M."/>
            <person name="Mangenot S."/>
            <person name="Martinez-Jehanne V."/>
            <person name="Matic I."/>
            <person name="Nassif X."/>
            <person name="Oztas S."/>
            <person name="Petit M.A."/>
            <person name="Pichon C."/>
            <person name="Rouy Z."/>
            <person name="Ruf C.S."/>
            <person name="Schneider D."/>
            <person name="Tourret J."/>
            <person name="Vacherie B."/>
            <person name="Vallenet D."/>
            <person name="Medigue C."/>
            <person name="Rocha E.P.C."/>
            <person name="Denamur E."/>
        </authorList>
    </citation>
    <scope>NUCLEOTIDE SEQUENCE [LARGE SCALE GENOMIC DNA]</scope>
    <source>
        <strain>S88 / ExPEC</strain>
    </source>
</reference>